<sequence length="873" mass="94753">MRFGWLEVAALTAASVANAQVFDNSHGNNQELAFSPPFYPSPWADGQGEWADAHRRAVEIVSQMTLAEKVNLTTGTGWEMDRCVGQTGSVPRLGINWGLCGQDSPLGIRFSDLNSAFPAGTNVAATWDKTLAYLRGKAMGEEFNDKGVDILLGPAAGPLGKYPDGGRIWEGFSPDPALTGVLFAETIKGIQDAGVIATAKHYILNEQEHFRQVGEAQGYGYNITETISSNVDDKTMHELYLWPFADAVRAGVGAVMCSYNQINNSYGCQNSQTLNKLLKAELGFQGFVMSDWSAHHSGVGAALAGLDMSMPGDISFDDGLSFWGTNLTVSVLNGTVPAWRVDDMAVRIMTAYYKVGRDRLRIPPNFSSWTRDEYGWEHSAVSEGAWTKVNDFVNVQRSHSQIIREIGAASTVLLKNTGALPLTGKEVKVGVLGEDAGSNPWGANGCPDRGCDNGTLAMAWGSGTANFPYLVTPEQAIQREVISNGGNVFAVTDNGALSQMADVASQSSVSLVFVNADSGEGFISVDGNEGDRKNLTLWKNGEAVIDTVVSHCNNTIVVIHSVGPVLIDRWYDNPNVTAIIWAGLPGQESGNSLVDVLYGRVNPSAKTPFTWGKTRESYGAPLLTEPNNGNGAPQDDFNEGVFIDYRHFDKRNETPIYEFGHGLSYTTFGYSHLRVQALNSSSSAYVPTSGETKPAPTYGEIGSAADYLYPEGLKRITKFIYPWLNSTDLEDSSDDPNYGWQDSEYIPEGARDGSPQPLLKAGGAPGGNPTLYQDLVRVSATITNTGNVAGYEVPQLYVSLGGPNEPRVVLRKFDRIFLAPGEQKVWTTTLNRRDLANWDVEAQDWVITKYPKKVHVGSSSRKLPLRAPLPRVY</sequence>
<gene>
    <name type="primary">bglA</name>
    <name type="synonym">bgl1</name>
    <name type="ORF">AFUA_1G05770</name>
</gene>
<protein>
    <recommendedName>
        <fullName>Probable beta-glucosidase A</fullName>
        <ecNumber>3.2.1.21</ecNumber>
    </recommendedName>
    <alternativeName>
        <fullName>Beta-D-glucoside glucohydrolase A</fullName>
    </alternativeName>
    <alternativeName>
        <fullName>Cellobiase A</fullName>
    </alternativeName>
    <alternativeName>
        <fullName>Gentiobiase A</fullName>
    </alternativeName>
</protein>
<feature type="signal peptide" evidence="2">
    <location>
        <begin position="1"/>
        <end position="19"/>
    </location>
</feature>
<feature type="chain" id="PRO_0000394095" description="Probable beta-glucosidase A">
    <location>
        <begin position="20"/>
        <end position="873"/>
    </location>
</feature>
<feature type="region of interest" description="Disordered" evidence="3">
    <location>
        <begin position="731"/>
        <end position="764"/>
    </location>
</feature>
<feature type="active site" evidence="1">
    <location>
        <position position="291"/>
    </location>
</feature>
<feature type="glycosylation site" description="N-linked (GlcNAc...) asparagine" evidence="2">
    <location>
        <position position="71"/>
    </location>
</feature>
<feature type="glycosylation site" description="N-linked (GlcNAc...) asparagine" evidence="2">
    <location>
        <position position="222"/>
    </location>
</feature>
<feature type="glycosylation site" description="N-linked (GlcNAc...) asparagine" evidence="2">
    <location>
        <position position="263"/>
    </location>
</feature>
<feature type="glycosylation site" description="N-linked (GlcNAc...) asparagine" evidence="2">
    <location>
        <position position="326"/>
    </location>
</feature>
<feature type="glycosylation site" description="N-linked (GlcNAc...) asparagine" evidence="2">
    <location>
        <position position="333"/>
    </location>
</feature>
<feature type="glycosylation site" description="N-linked (GlcNAc...) asparagine" evidence="2">
    <location>
        <position position="365"/>
    </location>
</feature>
<feature type="glycosylation site" description="N-linked (GlcNAc...) asparagine" evidence="2">
    <location>
        <position position="453"/>
    </location>
</feature>
<feature type="glycosylation site" description="N-linked (GlcNAc...) asparagine" evidence="2">
    <location>
        <position position="534"/>
    </location>
</feature>
<feature type="glycosylation site" description="N-linked (GlcNAc...) asparagine" evidence="2">
    <location>
        <position position="553"/>
    </location>
</feature>
<feature type="glycosylation site" description="N-linked (GlcNAc...) asparagine" evidence="2">
    <location>
        <position position="575"/>
    </location>
</feature>
<feature type="glycosylation site" description="N-linked (GlcNAc...) asparagine" evidence="2">
    <location>
        <position position="679"/>
    </location>
</feature>
<feature type="glycosylation site" description="N-linked (GlcNAc...) asparagine" evidence="2">
    <location>
        <position position="725"/>
    </location>
</feature>
<feature type="helix" evidence="5">
    <location>
        <begin position="48"/>
        <end position="50"/>
    </location>
</feature>
<feature type="helix" evidence="5">
    <location>
        <begin position="51"/>
        <end position="61"/>
    </location>
</feature>
<feature type="helix" evidence="5">
    <location>
        <begin position="66"/>
        <end position="73"/>
    </location>
</feature>
<feature type="strand" evidence="5">
    <location>
        <begin position="80"/>
        <end position="87"/>
    </location>
</feature>
<feature type="helix" evidence="5">
    <location>
        <begin position="91"/>
        <end position="93"/>
    </location>
</feature>
<feature type="strand" evidence="5">
    <location>
        <begin position="100"/>
        <end position="102"/>
    </location>
</feature>
<feature type="helix" evidence="5">
    <location>
        <begin position="120"/>
        <end position="126"/>
    </location>
</feature>
<feature type="helix" evidence="5">
    <location>
        <begin position="129"/>
        <end position="145"/>
    </location>
</feature>
<feature type="strand" evidence="5">
    <location>
        <begin position="149"/>
        <end position="151"/>
    </location>
</feature>
<feature type="helix" evidence="5">
    <location>
        <begin position="168"/>
        <end position="170"/>
    </location>
</feature>
<feature type="helix" evidence="5">
    <location>
        <begin position="176"/>
        <end position="192"/>
    </location>
</feature>
<feature type="strand" evidence="5">
    <location>
        <begin position="196"/>
        <end position="203"/>
    </location>
</feature>
<feature type="helix" evidence="5">
    <location>
        <begin position="213"/>
        <end position="218"/>
    </location>
</feature>
<feature type="strand" evidence="5">
    <location>
        <begin position="228"/>
        <end position="230"/>
    </location>
</feature>
<feature type="helix" evidence="5">
    <location>
        <begin position="233"/>
        <end position="238"/>
    </location>
</feature>
<feature type="helix" evidence="5">
    <location>
        <begin position="242"/>
        <end position="249"/>
    </location>
</feature>
<feature type="strand" evidence="5">
    <location>
        <begin position="253"/>
        <end position="257"/>
    </location>
</feature>
<feature type="strand" evidence="5">
    <location>
        <begin position="259"/>
        <end position="262"/>
    </location>
</feature>
<feature type="helix" evidence="5">
    <location>
        <begin position="267"/>
        <end position="269"/>
    </location>
</feature>
<feature type="helix" evidence="5">
    <location>
        <begin position="271"/>
        <end position="274"/>
    </location>
</feature>
<feature type="helix" evidence="5">
    <location>
        <begin position="275"/>
        <end position="281"/>
    </location>
</feature>
<feature type="strand" evidence="5">
    <location>
        <begin position="286"/>
        <end position="290"/>
    </location>
</feature>
<feature type="helix" evidence="5">
    <location>
        <begin position="299"/>
        <end position="304"/>
    </location>
</feature>
<feature type="strand" evidence="5">
    <location>
        <begin position="308"/>
        <end position="315"/>
    </location>
</feature>
<feature type="helix" evidence="5">
    <location>
        <begin position="325"/>
        <end position="332"/>
    </location>
</feature>
<feature type="helix" evidence="5">
    <location>
        <begin position="338"/>
        <end position="354"/>
    </location>
</feature>
<feature type="helix" evidence="5">
    <location>
        <begin position="357"/>
        <end position="360"/>
    </location>
</feature>
<feature type="strand" evidence="5">
    <location>
        <begin position="372"/>
        <end position="378"/>
    </location>
</feature>
<feature type="turn" evidence="5">
    <location>
        <begin position="379"/>
        <end position="382"/>
    </location>
</feature>
<feature type="strand" evidence="5">
    <location>
        <begin position="383"/>
        <end position="388"/>
    </location>
</feature>
<feature type="turn" evidence="5">
    <location>
        <begin position="397"/>
        <end position="399"/>
    </location>
</feature>
<feature type="helix" evidence="5">
    <location>
        <begin position="400"/>
        <end position="409"/>
    </location>
</feature>
<feature type="strand" evidence="5">
    <location>
        <begin position="412"/>
        <end position="418"/>
    </location>
</feature>
<feature type="strand" evidence="5">
    <location>
        <begin position="427"/>
        <end position="433"/>
    </location>
</feature>
<feature type="helix" evidence="5">
    <location>
        <begin position="434"/>
        <end position="436"/>
    </location>
</feature>
<feature type="helix" evidence="5">
    <location>
        <begin position="447"/>
        <end position="449"/>
    </location>
</feature>
<feature type="strand" evidence="5">
    <location>
        <begin position="460"/>
        <end position="463"/>
    </location>
</feature>
<feature type="helix" evidence="5">
    <location>
        <begin position="473"/>
        <end position="483"/>
    </location>
</feature>
<feature type="strand" evidence="5">
    <location>
        <begin position="487"/>
        <end position="491"/>
    </location>
</feature>
<feature type="helix" evidence="5">
    <location>
        <begin position="497"/>
        <end position="506"/>
    </location>
</feature>
<feature type="strand" evidence="5">
    <location>
        <begin position="508"/>
        <end position="516"/>
    </location>
</feature>
<feature type="strand" evidence="5">
    <location>
        <begin position="528"/>
        <end position="531"/>
    </location>
</feature>
<feature type="helix" evidence="5">
    <location>
        <begin position="541"/>
        <end position="549"/>
    </location>
</feature>
<feature type="strand" evidence="5">
    <location>
        <begin position="553"/>
        <end position="563"/>
    </location>
</feature>
<feature type="turn" evidence="5">
    <location>
        <begin position="568"/>
        <end position="572"/>
    </location>
</feature>
<feature type="strand" evidence="5">
    <location>
        <begin position="576"/>
        <end position="581"/>
    </location>
</feature>
<feature type="helix" evidence="5">
    <location>
        <begin position="586"/>
        <end position="588"/>
    </location>
</feature>
<feature type="helix" evidence="5">
    <location>
        <begin position="589"/>
        <end position="597"/>
    </location>
</feature>
<feature type="strand" evidence="5">
    <location>
        <begin position="613"/>
        <end position="615"/>
    </location>
</feature>
<feature type="helix" evidence="5">
    <location>
        <begin position="616"/>
        <end position="618"/>
    </location>
</feature>
<feature type="strand" evidence="5">
    <location>
        <begin position="634"/>
        <end position="636"/>
    </location>
</feature>
<feature type="turn" evidence="5">
    <location>
        <begin position="638"/>
        <end position="641"/>
    </location>
</feature>
<feature type="helix" evidence="5">
    <location>
        <begin position="645"/>
        <end position="650"/>
    </location>
</feature>
<feature type="strand" evidence="5">
    <location>
        <begin position="668"/>
        <end position="677"/>
    </location>
</feature>
<feature type="helix" evidence="5">
    <location>
        <begin position="704"/>
        <end position="707"/>
    </location>
</feature>
<feature type="strand" evidence="5">
    <location>
        <begin position="724"/>
        <end position="727"/>
    </location>
</feature>
<feature type="helix" evidence="5">
    <location>
        <begin position="729"/>
        <end position="733"/>
    </location>
</feature>
<feature type="turn" evidence="5">
    <location>
        <begin position="736"/>
        <end position="739"/>
    </location>
</feature>
<feature type="helix" evidence="5">
    <location>
        <begin position="742"/>
        <end position="744"/>
    </location>
</feature>
<feature type="turn" evidence="5">
    <location>
        <begin position="748"/>
        <end position="751"/>
    </location>
</feature>
<feature type="helix" evidence="5">
    <location>
        <begin position="769"/>
        <end position="772"/>
    </location>
</feature>
<feature type="strand" evidence="5">
    <location>
        <begin position="774"/>
        <end position="784"/>
    </location>
</feature>
<feature type="strand" evidence="5">
    <location>
        <begin position="786"/>
        <end position="788"/>
    </location>
</feature>
<feature type="strand" evidence="5">
    <location>
        <begin position="790"/>
        <end position="792"/>
    </location>
</feature>
<feature type="strand" evidence="5">
    <location>
        <begin position="795"/>
        <end position="799"/>
    </location>
</feature>
<feature type="strand" evidence="5">
    <location>
        <begin position="809"/>
        <end position="813"/>
    </location>
</feature>
<feature type="strand" evidence="5">
    <location>
        <begin position="816"/>
        <end position="818"/>
    </location>
</feature>
<feature type="strand" evidence="5">
    <location>
        <begin position="823"/>
        <end position="831"/>
    </location>
</feature>
<feature type="helix" evidence="5">
    <location>
        <begin position="832"/>
        <end position="835"/>
    </location>
</feature>
<feature type="strand" evidence="5">
    <location>
        <begin position="837"/>
        <end position="839"/>
    </location>
</feature>
<feature type="turn" evidence="5">
    <location>
        <begin position="840"/>
        <end position="843"/>
    </location>
</feature>
<feature type="strand" evidence="5">
    <location>
        <begin position="844"/>
        <end position="846"/>
    </location>
</feature>
<feature type="strand" evidence="5">
    <location>
        <begin position="853"/>
        <end position="861"/>
    </location>
</feature>
<feature type="strand" evidence="5">
    <location>
        <begin position="865"/>
        <end position="868"/>
    </location>
</feature>
<proteinExistence type="evidence at protein level"/>
<organism>
    <name type="scientific">Aspergillus fumigatus (strain ATCC MYA-4609 / CBS 101355 / FGSC A1100 / Af293)</name>
    <name type="common">Neosartorya fumigata</name>
    <dbReference type="NCBI Taxonomy" id="330879"/>
    <lineage>
        <taxon>Eukaryota</taxon>
        <taxon>Fungi</taxon>
        <taxon>Dikarya</taxon>
        <taxon>Ascomycota</taxon>
        <taxon>Pezizomycotina</taxon>
        <taxon>Eurotiomycetes</taxon>
        <taxon>Eurotiomycetidae</taxon>
        <taxon>Eurotiales</taxon>
        <taxon>Aspergillaceae</taxon>
        <taxon>Aspergillus</taxon>
        <taxon>Aspergillus subgen. Fumigati</taxon>
    </lineage>
</organism>
<dbReference type="EC" id="3.2.1.21"/>
<dbReference type="EMBL" id="AAHF01000007">
    <property type="protein sequence ID" value="EAL88289.1"/>
    <property type="molecule type" value="Genomic_DNA"/>
</dbReference>
<dbReference type="RefSeq" id="XP_750327.1">
    <property type="nucleotide sequence ID" value="XM_745234.1"/>
</dbReference>
<dbReference type="PDB" id="5FJI">
    <property type="method" value="X-ray"/>
    <property type="resolution" value="1.95 A"/>
    <property type="chains" value="A/B=30-873"/>
</dbReference>
<dbReference type="PDBsum" id="5FJI"/>
<dbReference type="SMR" id="Q4WJJ3"/>
<dbReference type="STRING" id="330879.Q4WJJ3"/>
<dbReference type="Allergome" id="8995">
    <property type="allergen name" value="Asp f Glucosidase"/>
</dbReference>
<dbReference type="CAZy" id="GH3">
    <property type="family name" value="Glycoside Hydrolase Family 3"/>
</dbReference>
<dbReference type="GlyCosmos" id="Q4WJJ3">
    <property type="glycosylation" value="12 sites, No reported glycans"/>
</dbReference>
<dbReference type="EnsemblFungi" id="EAL88289">
    <property type="protein sequence ID" value="EAL88289"/>
    <property type="gene ID" value="AFUA_1G05770"/>
</dbReference>
<dbReference type="GeneID" id="3507586"/>
<dbReference type="KEGG" id="afm:AFUA_1G05770"/>
<dbReference type="eggNOG" id="ENOG502QR4D">
    <property type="taxonomic scope" value="Eukaryota"/>
</dbReference>
<dbReference type="HOGENOM" id="CLU_004542_2_0_1"/>
<dbReference type="InParanoid" id="Q4WJJ3"/>
<dbReference type="OMA" id="YYPSPWA"/>
<dbReference type="OrthoDB" id="416222at2759"/>
<dbReference type="UniPathway" id="UPA00696"/>
<dbReference type="Proteomes" id="UP000002530">
    <property type="component" value="Chromosome 1"/>
</dbReference>
<dbReference type="GO" id="GO:0005576">
    <property type="term" value="C:extracellular region"/>
    <property type="evidence" value="ECO:0007669"/>
    <property type="project" value="UniProtKB-SubCell"/>
</dbReference>
<dbReference type="GO" id="GO:0008422">
    <property type="term" value="F:beta-glucosidase activity"/>
    <property type="evidence" value="ECO:0000318"/>
    <property type="project" value="GO_Central"/>
</dbReference>
<dbReference type="GO" id="GO:0030245">
    <property type="term" value="P:cellulose catabolic process"/>
    <property type="evidence" value="ECO:0007669"/>
    <property type="project" value="UniProtKB-UniPathway"/>
</dbReference>
<dbReference type="GO" id="GO:0009251">
    <property type="term" value="P:glucan catabolic process"/>
    <property type="evidence" value="ECO:0000318"/>
    <property type="project" value="GO_Central"/>
</dbReference>
<dbReference type="FunFam" id="2.60.40.10:FF:001391">
    <property type="entry name" value="Beta-glucosidase"/>
    <property type="match status" value="1"/>
</dbReference>
<dbReference type="FunFam" id="3.20.20.300:FF:000002">
    <property type="entry name" value="Probable beta-glucosidase"/>
    <property type="match status" value="1"/>
</dbReference>
<dbReference type="FunFam" id="3.40.50.1700:FF:000003">
    <property type="entry name" value="Probable beta-glucosidase"/>
    <property type="match status" value="1"/>
</dbReference>
<dbReference type="Gene3D" id="3.40.50.1700">
    <property type="entry name" value="Glycoside hydrolase family 3 C-terminal domain"/>
    <property type="match status" value="1"/>
</dbReference>
<dbReference type="Gene3D" id="3.20.20.300">
    <property type="entry name" value="Glycoside hydrolase, family 3, N-terminal domain"/>
    <property type="match status" value="1"/>
</dbReference>
<dbReference type="Gene3D" id="2.60.40.10">
    <property type="entry name" value="Immunoglobulins"/>
    <property type="match status" value="1"/>
</dbReference>
<dbReference type="InterPro" id="IPR050288">
    <property type="entry name" value="Cellulose_deg_GH3"/>
</dbReference>
<dbReference type="InterPro" id="IPR026891">
    <property type="entry name" value="Fn3-like"/>
</dbReference>
<dbReference type="InterPro" id="IPR019800">
    <property type="entry name" value="Glyco_hydro_3_AS"/>
</dbReference>
<dbReference type="InterPro" id="IPR002772">
    <property type="entry name" value="Glyco_hydro_3_C"/>
</dbReference>
<dbReference type="InterPro" id="IPR036881">
    <property type="entry name" value="Glyco_hydro_3_C_sf"/>
</dbReference>
<dbReference type="InterPro" id="IPR001764">
    <property type="entry name" value="Glyco_hydro_3_N"/>
</dbReference>
<dbReference type="InterPro" id="IPR036962">
    <property type="entry name" value="Glyco_hydro_3_N_sf"/>
</dbReference>
<dbReference type="InterPro" id="IPR017853">
    <property type="entry name" value="Glycoside_hydrolase_SF"/>
</dbReference>
<dbReference type="InterPro" id="IPR013783">
    <property type="entry name" value="Ig-like_fold"/>
</dbReference>
<dbReference type="PANTHER" id="PTHR42715">
    <property type="entry name" value="BETA-GLUCOSIDASE"/>
    <property type="match status" value="1"/>
</dbReference>
<dbReference type="PANTHER" id="PTHR42715:SF29">
    <property type="entry name" value="BETA-GLUCOSIDASE A-RELATED"/>
    <property type="match status" value="1"/>
</dbReference>
<dbReference type="Pfam" id="PF14310">
    <property type="entry name" value="Fn3-like"/>
    <property type="match status" value="1"/>
</dbReference>
<dbReference type="Pfam" id="PF00933">
    <property type="entry name" value="Glyco_hydro_3"/>
    <property type="match status" value="1"/>
</dbReference>
<dbReference type="Pfam" id="PF01915">
    <property type="entry name" value="Glyco_hydro_3_C"/>
    <property type="match status" value="1"/>
</dbReference>
<dbReference type="PRINTS" id="PR00133">
    <property type="entry name" value="GLHYDRLASE3"/>
</dbReference>
<dbReference type="SMART" id="SM01217">
    <property type="entry name" value="Fn3_like"/>
    <property type="match status" value="1"/>
</dbReference>
<dbReference type="SUPFAM" id="SSF51445">
    <property type="entry name" value="(Trans)glycosidases"/>
    <property type="match status" value="1"/>
</dbReference>
<dbReference type="SUPFAM" id="SSF52279">
    <property type="entry name" value="Beta-D-glucan exohydrolase, C-terminal domain"/>
    <property type="match status" value="1"/>
</dbReference>
<dbReference type="PROSITE" id="PS00775">
    <property type="entry name" value="GLYCOSYL_HYDROL_F3"/>
    <property type="match status" value="1"/>
</dbReference>
<accession>Q4WJJ3</accession>
<keyword id="KW-0002">3D-structure</keyword>
<keyword id="KW-0119">Carbohydrate metabolism</keyword>
<keyword id="KW-0136">Cellulose degradation</keyword>
<keyword id="KW-0325">Glycoprotein</keyword>
<keyword id="KW-0326">Glycosidase</keyword>
<keyword id="KW-0378">Hydrolase</keyword>
<keyword id="KW-0624">Polysaccharide degradation</keyword>
<keyword id="KW-1185">Reference proteome</keyword>
<keyword id="KW-0964">Secreted</keyword>
<keyword id="KW-0732">Signal</keyword>
<evidence type="ECO:0000250" key="1"/>
<evidence type="ECO:0000255" key="2"/>
<evidence type="ECO:0000256" key="3">
    <source>
        <dbReference type="SAM" id="MobiDB-lite"/>
    </source>
</evidence>
<evidence type="ECO:0000305" key="4"/>
<evidence type="ECO:0007829" key="5">
    <source>
        <dbReference type="PDB" id="5FJI"/>
    </source>
</evidence>
<reference key="1">
    <citation type="journal article" date="2005" name="Nature">
        <title>Genomic sequence of the pathogenic and allergenic filamentous fungus Aspergillus fumigatus.</title>
        <authorList>
            <person name="Nierman W.C."/>
            <person name="Pain A."/>
            <person name="Anderson M.J."/>
            <person name="Wortman J.R."/>
            <person name="Kim H.S."/>
            <person name="Arroyo J."/>
            <person name="Berriman M."/>
            <person name="Abe K."/>
            <person name="Archer D.B."/>
            <person name="Bermejo C."/>
            <person name="Bennett J.W."/>
            <person name="Bowyer P."/>
            <person name="Chen D."/>
            <person name="Collins M."/>
            <person name="Coulsen R."/>
            <person name="Davies R."/>
            <person name="Dyer P.S."/>
            <person name="Farman M.L."/>
            <person name="Fedorova N."/>
            <person name="Fedorova N.D."/>
            <person name="Feldblyum T.V."/>
            <person name="Fischer R."/>
            <person name="Fosker N."/>
            <person name="Fraser A."/>
            <person name="Garcia J.L."/>
            <person name="Garcia M.J."/>
            <person name="Goble A."/>
            <person name="Goldman G.H."/>
            <person name="Gomi K."/>
            <person name="Griffith-Jones S."/>
            <person name="Gwilliam R."/>
            <person name="Haas B.J."/>
            <person name="Haas H."/>
            <person name="Harris D.E."/>
            <person name="Horiuchi H."/>
            <person name="Huang J."/>
            <person name="Humphray S."/>
            <person name="Jimenez J."/>
            <person name="Keller N."/>
            <person name="Khouri H."/>
            <person name="Kitamoto K."/>
            <person name="Kobayashi T."/>
            <person name="Konzack S."/>
            <person name="Kulkarni R."/>
            <person name="Kumagai T."/>
            <person name="Lafton A."/>
            <person name="Latge J.-P."/>
            <person name="Li W."/>
            <person name="Lord A."/>
            <person name="Lu C."/>
            <person name="Majoros W.H."/>
            <person name="May G.S."/>
            <person name="Miller B.L."/>
            <person name="Mohamoud Y."/>
            <person name="Molina M."/>
            <person name="Monod M."/>
            <person name="Mouyna I."/>
            <person name="Mulligan S."/>
            <person name="Murphy L.D."/>
            <person name="O'Neil S."/>
            <person name="Paulsen I."/>
            <person name="Penalva M.A."/>
            <person name="Pertea M."/>
            <person name="Price C."/>
            <person name="Pritchard B.L."/>
            <person name="Quail M.A."/>
            <person name="Rabbinowitsch E."/>
            <person name="Rawlins N."/>
            <person name="Rajandream M.A."/>
            <person name="Reichard U."/>
            <person name="Renauld H."/>
            <person name="Robson G.D."/>
            <person name="Rodriguez de Cordoba S."/>
            <person name="Rodriguez-Pena J.M."/>
            <person name="Ronning C.M."/>
            <person name="Rutter S."/>
            <person name="Salzberg S.L."/>
            <person name="Sanchez M."/>
            <person name="Sanchez-Ferrero J.C."/>
            <person name="Saunders D."/>
            <person name="Seeger K."/>
            <person name="Squares R."/>
            <person name="Squares S."/>
            <person name="Takeuchi M."/>
            <person name="Tekaia F."/>
            <person name="Turner G."/>
            <person name="Vazquez de Aldana C.R."/>
            <person name="Weidman J."/>
            <person name="White O."/>
            <person name="Woodward J.R."/>
            <person name="Yu J.-H."/>
            <person name="Fraser C.M."/>
            <person name="Galagan J.E."/>
            <person name="Asai K."/>
            <person name="Machida M."/>
            <person name="Hall N."/>
            <person name="Barrell B.G."/>
            <person name="Denning D.W."/>
        </authorList>
    </citation>
    <scope>NUCLEOTIDE SEQUENCE [LARGE SCALE GENOMIC DNA]</scope>
    <source>
        <strain>ATCC MYA-4609 / CBS 101355 / FGSC A1100 / Af293</strain>
    </source>
</reference>
<name>BGLA_ASPFU</name>
<comment type="function">
    <text evidence="1">Beta-glucosidases are one of a number of cellulolytic enzymes involved in the degradation of cellulosic biomass. Catalyzes the last step releasing glucose from the inhibitory cellobiose (By similarity).</text>
</comment>
<comment type="catalytic activity">
    <reaction>
        <text>Hydrolysis of terminal, non-reducing beta-D-glucosyl residues with release of beta-D-glucose.</text>
        <dbReference type="EC" id="3.2.1.21"/>
    </reaction>
</comment>
<comment type="pathway">
    <text>Glycan metabolism; cellulose degradation.</text>
</comment>
<comment type="subcellular location">
    <subcellularLocation>
        <location evidence="1">Secreted</location>
    </subcellularLocation>
</comment>
<comment type="similarity">
    <text evidence="4">Belongs to the glycosyl hydrolase 3 family.</text>
</comment>